<geneLocation type="chloroplast"/>
<sequence>MSHSVKIYDTCIGCTQCVRACPTDVLEMIPWDGCKAKQIASAPRTEDCVGCKRCESACPTDFLSVRVYLWHETTRSMGLAY</sequence>
<accession>Q2MID6</accession>
<evidence type="ECO:0000250" key="1"/>
<evidence type="ECO:0000255" key="2">
    <source>
        <dbReference type="HAMAP-Rule" id="MF_01303"/>
    </source>
</evidence>
<keyword id="KW-0004">4Fe-4S</keyword>
<keyword id="KW-0150">Chloroplast</keyword>
<keyword id="KW-0249">Electron transport</keyword>
<keyword id="KW-0408">Iron</keyword>
<keyword id="KW-0411">Iron-sulfur</keyword>
<keyword id="KW-0472">Membrane</keyword>
<keyword id="KW-0479">Metal-binding</keyword>
<keyword id="KW-0560">Oxidoreductase</keyword>
<keyword id="KW-0602">Photosynthesis</keyword>
<keyword id="KW-0603">Photosystem I</keyword>
<keyword id="KW-0934">Plastid</keyword>
<keyword id="KW-0677">Repeat</keyword>
<keyword id="KW-0793">Thylakoid</keyword>
<keyword id="KW-0813">Transport</keyword>
<feature type="initiator methionine" description="Removed" evidence="1">
    <location>
        <position position="1"/>
    </location>
</feature>
<feature type="chain" id="PRO_0000275999" description="Photosystem I iron-sulfur center">
    <location>
        <begin position="2"/>
        <end position="81"/>
    </location>
</feature>
<feature type="domain" description="4Fe-4S ferredoxin-type 1" evidence="2">
    <location>
        <begin position="2"/>
        <end position="31"/>
    </location>
</feature>
<feature type="domain" description="4Fe-4S ferredoxin-type 2" evidence="2">
    <location>
        <begin position="39"/>
        <end position="68"/>
    </location>
</feature>
<feature type="binding site" evidence="2">
    <location>
        <position position="11"/>
    </location>
    <ligand>
        <name>[4Fe-4S] cluster</name>
        <dbReference type="ChEBI" id="CHEBI:49883"/>
        <label>1</label>
    </ligand>
</feature>
<feature type="binding site" evidence="2">
    <location>
        <position position="14"/>
    </location>
    <ligand>
        <name>[4Fe-4S] cluster</name>
        <dbReference type="ChEBI" id="CHEBI:49883"/>
        <label>1</label>
    </ligand>
</feature>
<feature type="binding site" evidence="2">
    <location>
        <position position="17"/>
    </location>
    <ligand>
        <name>[4Fe-4S] cluster</name>
        <dbReference type="ChEBI" id="CHEBI:49883"/>
        <label>1</label>
    </ligand>
</feature>
<feature type="binding site" evidence="2">
    <location>
        <position position="21"/>
    </location>
    <ligand>
        <name>[4Fe-4S] cluster</name>
        <dbReference type="ChEBI" id="CHEBI:49883"/>
        <label>2</label>
    </ligand>
</feature>
<feature type="binding site" evidence="2">
    <location>
        <position position="48"/>
    </location>
    <ligand>
        <name>[4Fe-4S] cluster</name>
        <dbReference type="ChEBI" id="CHEBI:49883"/>
        <label>2</label>
    </ligand>
</feature>
<feature type="binding site" evidence="2">
    <location>
        <position position="51"/>
    </location>
    <ligand>
        <name>[4Fe-4S] cluster</name>
        <dbReference type="ChEBI" id="CHEBI:49883"/>
        <label>2</label>
    </ligand>
</feature>
<feature type="binding site" evidence="2">
    <location>
        <position position="54"/>
    </location>
    <ligand>
        <name>[4Fe-4S] cluster</name>
        <dbReference type="ChEBI" id="CHEBI:49883"/>
        <label>2</label>
    </ligand>
</feature>
<feature type="binding site" evidence="2">
    <location>
        <position position="58"/>
    </location>
    <ligand>
        <name>[4Fe-4S] cluster</name>
        <dbReference type="ChEBI" id="CHEBI:49883"/>
        <label>1</label>
    </ligand>
</feature>
<dbReference type="EC" id="1.97.1.12" evidence="2"/>
<dbReference type="EMBL" id="DQ347958">
    <property type="protein sequence ID" value="ABC56265.1"/>
    <property type="molecule type" value="Genomic_DNA"/>
</dbReference>
<dbReference type="RefSeq" id="YP_538901.1">
    <property type="nucleotide sequence ID" value="NC_007943.1"/>
</dbReference>
<dbReference type="SMR" id="Q2MID6"/>
<dbReference type="GeneID" id="3989490"/>
<dbReference type="GO" id="GO:0009535">
    <property type="term" value="C:chloroplast thylakoid membrane"/>
    <property type="evidence" value="ECO:0007669"/>
    <property type="project" value="UniProtKB-SubCell"/>
</dbReference>
<dbReference type="GO" id="GO:0009522">
    <property type="term" value="C:photosystem I"/>
    <property type="evidence" value="ECO:0007669"/>
    <property type="project" value="UniProtKB-KW"/>
</dbReference>
<dbReference type="GO" id="GO:0051539">
    <property type="term" value="F:4 iron, 4 sulfur cluster binding"/>
    <property type="evidence" value="ECO:0007669"/>
    <property type="project" value="UniProtKB-KW"/>
</dbReference>
<dbReference type="GO" id="GO:0009055">
    <property type="term" value="F:electron transfer activity"/>
    <property type="evidence" value="ECO:0007669"/>
    <property type="project" value="UniProtKB-UniRule"/>
</dbReference>
<dbReference type="GO" id="GO:0046872">
    <property type="term" value="F:metal ion binding"/>
    <property type="evidence" value="ECO:0007669"/>
    <property type="project" value="UniProtKB-KW"/>
</dbReference>
<dbReference type="GO" id="GO:0016491">
    <property type="term" value="F:oxidoreductase activity"/>
    <property type="evidence" value="ECO:0007669"/>
    <property type="project" value="UniProtKB-KW"/>
</dbReference>
<dbReference type="GO" id="GO:0009773">
    <property type="term" value="P:photosynthetic electron transport in photosystem I"/>
    <property type="evidence" value="ECO:0007669"/>
    <property type="project" value="InterPro"/>
</dbReference>
<dbReference type="FunFam" id="3.30.70.20:FF:000001">
    <property type="entry name" value="Photosystem I iron-sulfur center"/>
    <property type="match status" value="1"/>
</dbReference>
<dbReference type="Gene3D" id="3.30.70.20">
    <property type="match status" value="1"/>
</dbReference>
<dbReference type="HAMAP" id="MF_01303">
    <property type="entry name" value="PSI_PsaC"/>
    <property type="match status" value="1"/>
</dbReference>
<dbReference type="InterPro" id="IPR017896">
    <property type="entry name" value="4Fe4S_Fe-S-bd"/>
</dbReference>
<dbReference type="InterPro" id="IPR017900">
    <property type="entry name" value="4Fe4S_Fe_S_CS"/>
</dbReference>
<dbReference type="InterPro" id="IPR050157">
    <property type="entry name" value="PSI_iron-sulfur_center"/>
</dbReference>
<dbReference type="InterPro" id="IPR017491">
    <property type="entry name" value="PSI_PsaC"/>
</dbReference>
<dbReference type="NCBIfam" id="TIGR03048">
    <property type="entry name" value="PS_I_psaC"/>
    <property type="match status" value="1"/>
</dbReference>
<dbReference type="PANTHER" id="PTHR24960:SF79">
    <property type="entry name" value="PHOTOSYSTEM I IRON-SULFUR CENTER"/>
    <property type="match status" value="1"/>
</dbReference>
<dbReference type="PANTHER" id="PTHR24960">
    <property type="entry name" value="PHOTOSYSTEM I IRON-SULFUR CENTER-RELATED"/>
    <property type="match status" value="1"/>
</dbReference>
<dbReference type="Pfam" id="PF14697">
    <property type="entry name" value="Fer4_21"/>
    <property type="match status" value="1"/>
</dbReference>
<dbReference type="SUPFAM" id="SSF54862">
    <property type="entry name" value="4Fe-4S ferredoxins"/>
    <property type="match status" value="1"/>
</dbReference>
<dbReference type="PROSITE" id="PS00198">
    <property type="entry name" value="4FE4S_FER_1"/>
    <property type="match status" value="2"/>
</dbReference>
<dbReference type="PROSITE" id="PS51379">
    <property type="entry name" value="4FE4S_FER_2"/>
    <property type="match status" value="2"/>
</dbReference>
<gene>
    <name evidence="2" type="primary">psaC</name>
</gene>
<name>PSAC_SOLBU</name>
<reference key="1">
    <citation type="journal article" date="2006" name="Theor. Appl. Genet.">
        <title>Complete chloroplast genome sequences of Solanum bulbocastanum, Solanum lycopersicum and comparative analyses with other Solanaceae genomes.</title>
        <authorList>
            <person name="Daniell H."/>
            <person name="Lee S.-B."/>
            <person name="Grevich J."/>
            <person name="Saski C."/>
            <person name="Quesada-Vargas T."/>
            <person name="Guda C."/>
            <person name="Tomkins J."/>
            <person name="Jansen R.K."/>
        </authorList>
    </citation>
    <scope>NUCLEOTIDE SEQUENCE [LARGE SCALE GENOMIC DNA]</scope>
    <source>
        <strain>cv. PT29</strain>
    </source>
</reference>
<protein>
    <recommendedName>
        <fullName evidence="2">Photosystem I iron-sulfur center</fullName>
        <ecNumber evidence="2">1.97.1.12</ecNumber>
    </recommendedName>
    <alternativeName>
        <fullName evidence="2">9 kDa polypeptide</fullName>
    </alternativeName>
    <alternativeName>
        <fullName evidence="2">PSI-C</fullName>
    </alternativeName>
    <alternativeName>
        <fullName evidence="2">Photosystem I subunit VII</fullName>
    </alternativeName>
    <alternativeName>
        <fullName evidence="2">PsaC</fullName>
    </alternativeName>
</protein>
<comment type="function">
    <text evidence="2">Apoprotein for the two 4Fe-4S centers FA and FB of photosystem I (PSI); essential for photochemical activity. FB is the terminal electron acceptor of PSI, donating electrons to ferredoxin. The C-terminus interacts with PsaA/B/D and helps assemble the protein into the PSI complex. Required for binding of PsaD and PsaE to PSI. PSI is a plastocyanin-ferredoxin oxidoreductase, converting photonic excitation into a charge separation, which transfers an electron from the donor P700 chlorophyll pair to the spectroscopically characterized acceptors A0, A1, FX, FA and FB in turn.</text>
</comment>
<comment type="catalytic activity">
    <reaction evidence="2">
        <text>reduced [plastocyanin] + hnu + oxidized [2Fe-2S]-[ferredoxin] = oxidized [plastocyanin] + reduced [2Fe-2S]-[ferredoxin]</text>
        <dbReference type="Rhea" id="RHEA:30407"/>
        <dbReference type="Rhea" id="RHEA-COMP:10000"/>
        <dbReference type="Rhea" id="RHEA-COMP:10001"/>
        <dbReference type="Rhea" id="RHEA-COMP:10039"/>
        <dbReference type="Rhea" id="RHEA-COMP:10040"/>
        <dbReference type="ChEBI" id="CHEBI:29036"/>
        <dbReference type="ChEBI" id="CHEBI:30212"/>
        <dbReference type="ChEBI" id="CHEBI:33737"/>
        <dbReference type="ChEBI" id="CHEBI:33738"/>
        <dbReference type="ChEBI" id="CHEBI:49552"/>
        <dbReference type="EC" id="1.97.1.12"/>
    </reaction>
</comment>
<comment type="cofactor">
    <cofactor evidence="2">
        <name>[4Fe-4S] cluster</name>
        <dbReference type="ChEBI" id="CHEBI:49883"/>
    </cofactor>
    <text evidence="2">Binds 2 [4Fe-4S] clusters. Cluster 2 is most probably the spectroscopically characterized electron acceptor FA and cluster 1 is most probably FB.</text>
</comment>
<comment type="subunit">
    <text evidence="2">The eukaryotic PSI reaction center is composed of at least 11 subunits.</text>
</comment>
<comment type="subcellular location">
    <subcellularLocation>
        <location evidence="2">Plastid</location>
        <location evidence="2">Chloroplast thylakoid membrane</location>
        <topology evidence="2">Peripheral membrane protein</topology>
        <orientation evidence="2">Stromal side</orientation>
    </subcellularLocation>
</comment>
<proteinExistence type="inferred from homology"/>
<organism>
    <name type="scientific">Solanum bulbocastanum</name>
    <name type="common">Wild potato</name>
    <dbReference type="NCBI Taxonomy" id="147425"/>
    <lineage>
        <taxon>Eukaryota</taxon>
        <taxon>Viridiplantae</taxon>
        <taxon>Streptophyta</taxon>
        <taxon>Embryophyta</taxon>
        <taxon>Tracheophyta</taxon>
        <taxon>Spermatophyta</taxon>
        <taxon>Magnoliopsida</taxon>
        <taxon>eudicotyledons</taxon>
        <taxon>Gunneridae</taxon>
        <taxon>Pentapetalae</taxon>
        <taxon>asterids</taxon>
        <taxon>lamiids</taxon>
        <taxon>Solanales</taxon>
        <taxon>Solanaceae</taxon>
        <taxon>Solanoideae</taxon>
        <taxon>Solaneae</taxon>
        <taxon>Solanum</taxon>
    </lineage>
</organism>